<feature type="chain" id="PRO_0000088082" description="Protein-tyrosine kinase 2-beta">
    <location>
        <begin position="1"/>
        <end position="1009"/>
    </location>
</feature>
<feature type="domain" description="FERM" evidence="4">
    <location>
        <begin position="39"/>
        <end position="359"/>
    </location>
</feature>
<feature type="domain" description="Protein kinase" evidence="5">
    <location>
        <begin position="425"/>
        <end position="683"/>
    </location>
</feature>
<feature type="region of interest" description="Disordered" evidence="7">
    <location>
        <begin position="696"/>
        <end position="728"/>
    </location>
</feature>
<feature type="region of interest" description="Interaction with TGFB1I1" evidence="1">
    <location>
        <begin position="801"/>
        <end position="1009"/>
    </location>
</feature>
<feature type="region of interest" description="Focal adhesion targeting (FAT)">
    <location>
        <begin position="868"/>
        <end position="1009"/>
    </location>
</feature>
<feature type="compositionally biased region" description="Pro residues" evidence="7">
    <location>
        <begin position="712"/>
        <end position="727"/>
    </location>
</feature>
<feature type="active site" description="Proton acceptor" evidence="5 6">
    <location>
        <position position="549"/>
    </location>
</feature>
<feature type="binding site" evidence="5">
    <location>
        <begin position="431"/>
        <end position="439"/>
    </location>
    <ligand>
        <name>ATP</name>
        <dbReference type="ChEBI" id="CHEBI:30616"/>
    </ligand>
</feature>
<feature type="binding site" evidence="5">
    <location>
        <position position="457"/>
    </location>
    <ligand>
        <name>ATP</name>
        <dbReference type="ChEBI" id="CHEBI:30616"/>
    </ligand>
</feature>
<feature type="binding site" evidence="5">
    <location>
        <begin position="503"/>
        <end position="509"/>
    </location>
    <ligand>
        <name>ATP</name>
        <dbReference type="ChEBI" id="CHEBI:30616"/>
    </ligand>
</feature>
<feature type="modified residue" description="Phosphoserine" evidence="3">
    <location>
        <position position="361"/>
    </location>
</feature>
<feature type="modified residue" description="Phosphoserine" evidence="30 31">
    <location>
        <position position="375"/>
    </location>
</feature>
<feature type="modified residue" description="Phosphoserine" evidence="3">
    <location>
        <position position="399"/>
    </location>
</feature>
<feature type="modified residue" description="Phosphotyrosine; by autocatalysis" evidence="11 12 16 23 24 29">
    <location>
        <position position="402"/>
    </location>
</feature>
<feature type="modified residue" description="Phosphotyrosine" evidence="23 29">
    <location>
        <position position="579"/>
    </location>
</feature>
<feature type="modified residue" description="Phosphotyrosine; by SRC, FYN and LCK" evidence="11 24 29">
    <location>
        <position position="580"/>
    </location>
</feature>
<feature type="modified residue" description="Phosphotyrosine" evidence="3">
    <location>
        <position position="722"/>
    </location>
</feature>
<feature type="modified residue" description="Phosphoserine" evidence="3">
    <location>
        <position position="762"/>
    </location>
</feature>
<feature type="modified residue" description="Phosphothreonine" evidence="3">
    <location>
        <position position="765"/>
    </location>
</feature>
<feature type="modified residue" description="Phosphotyrosine" evidence="3">
    <location>
        <position position="834"/>
    </location>
</feature>
<feature type="modified residue" description="Phosphoserine" evidence="3">
    <location>
        <position position="839"/>
    </location>
</feature>
<feature type="modified residue" description="Phosphothreonine" evidence="3">
    <location>
        <position position="842"/>
    </location>
</feature>
<feature type="modified residue" description="Phosphotyrosine" evidence="3">
    <location>
        <position position="849"/>
    </location>
</feature>
<feature type="modified residue" description="Phosphoserine" evidence="3">
    <location>
        <position position="866"/>
    </location>
</feature>
<feature type="modified residue" description="Phosphotyrosine" evidence="11 24">
    <location>
        <position position="881"/>
    </location>
</feature>
<feature type="mutagenesis site" description="Loss of phosphorylation and interaction with SRC, and inhibition of bone resorption." evidence="16">
    <original>Y</original>
    <variation>A</variation>
    <location>
        <position position="402"/>
    </location>
</feature>
<feature type="sequence conflict" description="In Ref. 4; AAI37705/AAI44850." evidence="28" ref="4">
    <original>K</original>
    <variation>R</variation>
    <location>
        <position position="306"/>
    </location>
</feature>
<organism>
    <name type="scientific">Mus musculus</name>
    <name type="common">Mouse</name>
    <dbReference type="NCBI Taxonomy" id="10090"/>
    <lineage>
        <taxon>Eukaryota</taxon>
        <taxon>Metazoa</taxon>
        <taxon>Chordata</taxon>
        <taxon>Craniata</taxon>
        <taxon>Vertebrata</taxon>
        <taxon>Euteleostomi</taxon>
        <taxon>Mammalia</taxon>
        <taxon>Eutheria</taxon>
        <taxon>Euarchontoglires</taxon>
        <taxon>Glires</taxon>
        <taxon>Rodentia</taxon>
        <taxon>Myomorpha</taxon>
        <taxon>Muroidea</taxon>
        <taxon>Muridae</taxon>
        <taxon>Murinae</taxon>
        <taxon>Mus</taxon>
        <taxon>Mus</taxon>
    </lineage>
</organism>
<proteinExistence type="evidence at protein level"/>
<name>FAK2_MOUSE</name>
<keyword id="KW-1064">Adaptive immunity</keyword>
<keyword id="KW-0037">Angiogenesis</keyword>
<keyword id="KW-0067">ATP-binding</keyword>
<keyword id="KW-0965">Cell junction</keyword>
<keyword id="KW-1003">Cell membrane</keyword>
<keyword id="KW-0966">Cell projection</keyword>
<keyword id="KW-0963">Cytoplasm</keyword>
<keyword id="KW-0903">Direct protein sequencing</keyword>
<keyword id="KW-0391">Immunity</keyword>
<keyword id="KW-0418">Kinase</keyword>
<keyword id="KW-0472">Membrane</keyword>
<keyword id="KW-0547">Nucleotide-binding</keyword>
<keyword id="KW-0539">Nucleus</keyword>
<keyword id="KW-0597">Phosphoprotein</keyword>
<keyword id="KW-1185">Reference proteome</keyword>
<keyword id="KW-0808">Transferase</keyword>
<keyword id="KW-0829">Tyrosine-protein kinase</keyword>
<evidence type="ECO:0000250" key="1"/>
<evidence type="ECO:0000250" key="2">
    <source>
        <dbReference type="UniProtKB" id="P70600"/>
    </source>
</evidence>
<evidence type="ECO:0000250" key="3">
    <source>
        <dbReference type="UniProtKB" id="Q14289"/>
    </source>
</evidence>
<evidence type="ECO:0000255" key="4">
    <source>
        <dbReference type="PROSITE-ProRule" id="PRU00084"/>
    </source>
</evidence>
<evidence type="ECO:0000255" key="5">
    <source>
        <dbReference type="PROSITE-ProRule" id="PRU00159"/>
    </source>
</evidence>
<evidence type="ECO:0000255" key="6">
    <source>
        <dbReference type="PROSITE-ProRule" id="PRU10028"/>
    </source>
</evidence>
<evidence type="ECO:0000256" key="7">
    <source>
        <dbReference type="SAM" id="MobiDB-lite"/>
    </source>
</evidence>
<evidence type="ECO:0000269" key="8">
    <source>
    </source>
</evidence>
<evidence type="ECO:0000269" key="9">
    <source>
    </source>
</evidence>
<evidence type="ECO:0000269" key="10">
    <source>
    </source>
</evidence>
<evidence type="ECO:0000269" key="11">
    <source>
    </source>
</evidence>
<evidence type="ECO:0000269" key="12">
    <source>
    </source>
</evidence>
<evidence type="ECO:0000269" key="13">
    <source>
    </source>
</evidence>
<evidence type="ECO:0000269" key="14">
    <source>
    </source>
</evidence>
<evidence type="ECO:0000269" key="15">
    <source>
    </source>
</evidence>
<evidence type="ECO:0000269" key="16">
    <source>
    </source>
</evidence>
<evidence type="ECO:0000269" key="17">
    <source>
    </source>
</evidence>
<evidence type="ECO:0000269" key="18">
    <source>
    </source>
</evidence>
<evidence type="ECO:0000269" key="19">
    <source>
    </source>
</evidence>
<evidence type="ECO:0000269" key="20">
    <source>
    </source>
</evidence>
<evidence type="ECO:0000269" key="21">
    <source>
    </source>
</evidence>
<evidence type="ECO:0000269" key="22">
    <source>
    </source>
</evidence>
<evidence type="ECO:0000269" key="23">
    <source>
    </source>
</evidence>
<evidence type="ECO:0000269" key="24">
    <source>
    </source>
</evidence>
<evidence type="ECO:0000269" key="25">
    <source>
    </source>
</evidence>
<evidence type="ECO:0000269" key="26">
    <source>
    </source>
</evidence>
<evidence type="ECO:0000269" key="27">
    <source>
    </source>
</evidence>
<evidence type="ECO:0000305" key="28"/>
<evidence type="ECO:0007744" key="29">
    <source>
    </source>
</evidence>
<evidence type="ECO:0007744" key="30">
    <source>
    </source>
</evidence>
<evidence type="ECO:0007744" key="31">
    <source>
    </source>
</evidence>
<reference key="1">
    <citation type="journal article" date="1995" name="J. Biol. Chem.">
        <title>Identification and characterization of a novel related adhesion focal tyrosine kinase (RAFTK) from megakaryocytes and brain.</title>
        <authorList>
            <person name="Avraham S."/>
            <person name="London R."/>
            <person name="Fu Y."/>
            <person name="Ota S."/>
            <person name="Hiregowdara D."/>
            <person name="Li J."/>
            <person name="Jiang S."/>
            <person name="Pasztor L.M."/>
            <person name="White R.A."/>
            <person name="Groopman J.E."/>
            <person name="Avraham H."/>
        </authorList>
    </citation>
    <scope>NUCLEOTIDE SEQUENCE [MRNA]</scope>
    <source>
        <tissue>Brain</tissue>
    </source>
</reference>
<reference key="2">
    <citation type="journal article" date="2009" name="PLoS Biol.">
        <title>Lineage-specific biology revealed by a finished genome assembly of the mouse.</title>
        <authorList>
            <person name="Church D.M."/>
            <person name="Goodstadt L."/>
            <person name="Hillier L.W."/>
            <person name="Zody M.C."/>
            <person name="Goldstein S."/>
            <person name="She X."/>
            <person name="Bult C.J."/>
            <person name="Agarwala R."/>
            <person name="Cherry J.L."/>
            <person name="DiCuccio M."/>
            <person name="Hlavina W."/>
            <person name="Kapustin Y."/>
            <person name="Meric P."/>
            <person name="Maglott D."/>
            <person name="Birtle Z."/>
            <person name="Marques A.C."/>
            <person name="Graves T."/>
            <person name="Zhou S."/>
            <person name="Teague B."/>
            <person name="Potamousis K."/>
            <person name="Churas C."/>
            <person name="Place M."/>
            <person name="Herschleb J."/>
            <person name="Runnheim R."/>
            <person name="Forrest D."/>
            <person name="Amos-Landgraf J."/>
            <person name="Schwartz D.C."/>
            <person name="Cheng Z."/>
            <person name="Lindblad-Toh K."/>
            <person name="Eichler E.E."/>
            <person name="Ponting C.P."/>
        </authorList>
    </citation>
    <scope>NUCLEOTIDE SEQUENCE [LARGE SCALE GENOMIC DNA]</scope>
    <source>
        <strain>C57BL/6J</strain>
    </source>
</reference>
<reference key="3">
    <citation type="submission" date="2005-07" db="EMBL/GenBank/DDBJ databases">
        <authorList>
            <person name="Mural R.J."/>
            <person name="Adams M.D."/>
            <person name="Myers E.W."/>
            <person name="Smith H.O."/>
            <person name="Venter J.C."/>
        </authorList>
    </citation>
    <scope>NUCLEOTIDE SEQUENCE [LARGE SCALE GENOMIC DNA]</scope>
</reference>
<reference key="4">
    <citation type="journal article" date="2004" name="Genome Res.">
        <title>The status, quality, and expansion of the NIH full-length cDNA project: the Mammalian Gene Collection (MGC).</title>
        <authorList>
            <consortium name="The MGC Project Team"/>
        </authorList>
    </citation>
    <scope>NUCLEOTIDE SEQUENCE [LARGE SCALE MRNA]</scope>
    <source>
        <tissue>Brain</tissue>
    </source>
</reference>
<reference key="5">
    <citation type="submission" date="2009-01" db="UniProtKB">
        <authorList>
            <person name="Lubec G."/>
            <person name="Sunyer B."/>
            <person name="Chen W.-Q."/>
        </authorList>
    </citation>
    <scope>PROTEIN SEQUENCE OF 469-479</scope>
    <scope>IDENTIFICATION BY MASS SPECTROMETRY</scope>
    <source>
        <strain>OF1</strain>
        <tissue>Hippocampus</tissue>
    </source>
</reference>
<reference key="6">
    <citation type="journal article" date="1996" name="J. Biol. Chem.">
        <title>The related adhesion focal tyrosine kinase forms a complex with paxillin in hematopoietic cells.</title>
        <authorList>
            <person name="Salgia R."/>
            <person name="Avraham S."/>
            <person name="Pisick E."/>
            <person name="Li J.L."/>
            <person name="Raja S."/>
            <person name="Greenfield E.A."/>
            <person name="Sattler M."/>
            <person name="Avraham H."/>
            <person name="Griffin J.D."/>
        </authorList>
    </citation>
    <scope>INTERACTION WITH PXN</scope>
</reference>
<reference key="7">
    <citation type="journal article" date="1998" name="J. Biol. Chem.">
        <title>Cell adhesion kinase beta forms a complex with a new member, Hic-5, of proteins localized at focal adhesions.</title>
        <authorList>
            <person name="Matsuya M."/>
            <person name="Sasaki H."/>
            <person name="Aoto H."/>
            <person name="Mitaka T."/>
            <person name="Nagura K."/>
            <person name="Ohba T."/>
            <person name="Ishino M."/>
            <person name="Takahashi S."/>
            <person name="Suzuki R."/>
            <person name="Sasaki T."/>
        </authorList>
    </citation>
    <scope>INTERACTION WITH TGFB1I1</scope>
</reference>
<reference key="8">
    <citation type="journal article" date="1999" name="Curr. Biol.">
        <title>SHPS-1 is a scaffold for assembling distinct adhesion-regulated multi-protein complexes in macrophages.</title>
        <authorList>
            <person name="Timms J.F."/>
            <person name="Swanson K.D."/>
            <person name="Marie-Cardine A."/>
            <person name="Raab M."/>
            <person name="Rudd C.E."/>
            <person name="Schraven B."/>
            <person name="Neel B.G."/>
        </authorList>
    </citation>
    <scope>INTERACTION WITH SIRPA</scope>
</reference>
<reference key="9">
    <citation type="journal article" date="2000" name="Nat. Immunol.">
        <title>Absence of marginal zone B cells in Pyk-2-deficient mice defines their role in the humoral response.</title>
        <authorList>
            <person name="Guinamard R."/>
            <person name="Okigaki M."/>
            <person name="Schlessinger J."/>
            <person name="Ravetch J.V."/>
        </authorList>
    </citation>
    <scope>DISRUPTION PHENOTYPE</scope>
    <scope>FUNCTION IN B-CELL DIFFERENTIATION; B-CELL CHEMOTAXIS AND IMMUNE RESPONSE</scope>
</reference>
<reference key="10">
    <citation type="journal article" date="2001" name="J. Cell Biol.">
        <title>Regulation of CDC42 GTPase by proline-rich tyrosine kinase 2 interacting with PSGAP, a novel pleckstrin homology and Src homology 3 domain containing rhoGAP protein.</title>
        <authorList>
            <person name="Ren X.-R."/>
            <person name="Du Q.-S."/>
            <person name="Huang Y.-Z."/>
            <person name="Ao S.-Z."/>
            <person name="Mei L."/>
            <person name="Xiong W.-C."/>
        </authorList>
    </citation>
    <scope>INTERACTION WITH ARHGAP10</scope>
    <scope>FUNCTION IN REGULATION OF ARHGAP10 ACTIVITY AND ACTIVATION OF CDC42 AND RHOA</scope>
</reference>
<reference key="11">
    <citation type="journal article" date="2001" name="Oncogene">
        <title>Different modes and qualities of tyrosine phosphorylation of Fak and Pyk2 during epithelial-mesenchymal transdifferentiation and cell migration: analysis of specific phosphorylation events using site-directed antibodies.</title>
        <authorList>
            <person name="Nakamura K."/>
            <person name="Yano H."/>
            <person name="Schaefer E."/>
            <person name="Sabe H."/>
        </authorList>
    </citation>
    <scope>PHOSPHORYLATION AT TYR-402; TYR-580 AND TYR-881</scope>
</reference>
<reference key="12">
    <citation type="journal article" date="2001" name="Proc. Natl. Acad. Sci. U.S.A.">
        <title>Nephrocystin interacts with Pyk2, p130(Cas), and tensin and triggers phosphorylation of Pyk2.</title>
        <authorList>
            <person name="Benzing T."/>
            <person name="Gerke P."/>
            <person name="Hoepker K."/>
            <person name="Hildebrandt F."/>
            <person name="Kim E."/>
            <person name="Walz G."/>
        </authorList>
    </citation>
    <scope>PHOSPHORYLATION AT TYR-402</scope>
    <scope>INTERACTION WITH NPHP1</scope>
</reference>
<reference key="13">
    <citation type="journal article" date="2003" name="J. Biol. Chem.">
        <title>A novel hematopoietic adaptor protein, Chat-H, positively regulates T cell receptor-mediated interleukin-2 production by Jurkat cells.</title>
        <authorList>
            <person name="Sakakibara A."/>
            <person name="Hattori S."/>
            <person name="Nakamura S."/>
            <person name="Katagiri T."/>
        </authorList>
    </citation>
    <scope>INTERACTION WITH SH2D3C</scope>
</reference>
<reference key="14">
    <citation type="journal article" date="2003" name="J. Bone Miner. Res.">
        <title>Leupaxin is a critical adaptor protein in the adhesion zone of the osteoclast.</title>
        <authorList>
            <person name="Gupta A."/>
            <person name="Lee B.S."/>
            <person name="Khadeer M.A."/>
            <person name="Tang Z."/>
            <person name="Chellaiah M."/>
            <person name="Abu-Amer Y."/>
            <person name="Goldknopf J."/>
            <person name="Hruska K.A."/>
        </authorList>
    </citation>
    <scope>INTERACTION WITH LPXN AMD PTPN12</scope>
</reference>
<reference key="15">
    <citation type="journal article" date="2003" name="Proc. Natl. Acad. Sci. U.S.A.">
        <title>Pyk2 regulates multiple signaling events crucial for macrophage morphology and migration.</title>
        <authorList>
            <person name="Okigaki M."/>
            <person name="Davis C."/>
            <person name="Falasca M."/>
            <person name="Harroch S."/>
            <person name="Felsenfeld D.P."/>
            <person name="Sheetz M.P."/>
            <person name="Schlessinger J."/>
        </authorList>
    </citation>
    <scope>DISRUPTION PHENOTYPE</scope>
    <scope>FUNCTION</scope>
</reference>
<reference key="16">
    <citation type="journal article" date="2004" name="J. Biol. Chem.">
        <title>Src kinase activity is essential for osteoclast function.</title>
        <authorList>
            <person name="Miyazaki T."/>
            <person name="Sanjay A."/>
            <person name="Neff L."/>
            <person name="Tanaka S."/>
            <person name="Horne W.C."/>
            <person name="Baron R."/>
        </authorList>
    </citation>
    <scope>FUNCTION IN BONE RESORPTION</scope>
    <scope>INTERACTION WITH SRC</scope>
    <scope>PHOSPHORYLATION AT TYR-402</scope>
    <scope>MUTAGENESIS OF TYR-402</scope>
</reference>
<reference key="17">
    <citation type="journal article" date="2005" name="Exp. Cell Res.">
        <title>The proto-oncogene Fgr regulates cell migration and this requires its plasma membrane localization.</title>
        <authorList>
            <person name="Continolo S."/>
            <person name="Baruzzi A."/>
            <person name="Majeed M."/>
            <person name="Caveggion E."/>
            <person name="Fumagalli L."/>
            <person name="Lowell C.A."/>
            <person name="Berton G."/>
        </authorList>
    </citation>
    <scope>PHOSPHORYLATION IN RESPONSE TO FGR</scope>
</reference>
<reference key="18">
    <citation type="journal article" date="2007" name="Circulation">
        <title>Central role of calcium-dependent tyrosine kinase PYK2 in endothelial nitric oxide synthase-mediated angiogenic response and vascular function.</title>
        <authorList>
            <person name="Matsui A."/>
            <person name="Okigaki M."/>
            <person name="Amano K."/>
            <person name="Adachi Y."/>
            <person name="Jin D."/>
            <person name="Takai S."/>
            <person name="Yamashita T."/>
            <person name="Kawashima S."/>
            <person name="Kurihara T."/>
            <person name="Miyazaki M."/>
            <person name="Tateishi K."/>
            <person name="Matsunaga S."/>
            <person name="Katsume A."/>
            <person name="Honshou S."/>
            <person name="Takahashi T."/>
            <person name="Matoba S."/>
            <person name="Kusaba T."/>
            <person name="Tatsumi T."/>
            <person name="Matsubara H."/>
        </authorList>
    </citation>
    <scope>FUNCTION IN VEGFA SIGNALING; REGULATION OF INTRACELLULAR CALCIUM LEVELS; ACTIVATION OF AKT1 AND RAC1; PHOSPHORYLATION OF SRC; REORGANIZATION OF ACTIN CYTOSKELETON; CELL MIGRATION AND ANGIOGENESIS</scope>
    <scope>INTERACTION WITH SRC</scope>
</reference>
<reference key="19">
    <citation type="journal article" date="2007" name="J. Cell Biol.">
        <title>Defective microtubule-dependent podosome organization in osteoclasts leads to increased bone density in Pyk2(-/-) mice.</title>
        <authorList>
            <person name="Gil-Henn H."/>
            <person name="Destaing O."/>
            <person name="Sims N.A."/>
            <person name="Aoki K."/>
            <person name="Alles N."/>
            <person name="Neff L."/>
            <person name="Sanjay A."/>
            <person name="Bruzzaniti A."/>
            <person name="De Camilli P."/>
            <person name="Baron R."/>
            <person name="Schlessinger J."/>
        </authorList>
    </citation>
    <scope>DISRUPTION PHENOTYPE</scope>
    <scope>FUNCTION</scope>
</reference>
<reference key="20">
    <citation type="journal article" date="2007" name="J. Immunol.">
        <title>Quantitative time-resolved phosphoproteomic analysis of mast cell signaling.</title>
        <authorList>
            <person name="Cao L."/>
            <person name="Yu K."/>
            <person name="Banh C."/>
            <person name="Nguyen V."/>
            <person name="Ritz A."/>
            <person name="Raphael B.J."/>
            <person name="Kawakami Y."/>
            <person name="Kawakami T."/>
            <person name="Salomon A.R."/>
        </authorList>
    </citation>
    <scope>PHOSPHORYLATION [LARGE SCALE ANALYSIS] AT TYR-402; TYR-579 AND TYR-580</scope>
    <scope>IDENTIFICATION BY MASS SPECTROMETRY [LARGE SCALE ANALYSIS]</scope>
    <source>
        <tissue>Mast cell</tissue>
    </source>
</reference>
<reference key="21">
    <citation type="journal article" date="2007" name="Proc. Natl. Acad. Sci. U.S.A.">
        <title>Proline-rich tyrosine kinase 2 regulates osteoprogenitor cells and bone formation, and offers an anabolic treatment approach for osteoporosis.</title>
        <authorList>
            <person name="Buckbinder L."/>
            <person name="Crawford D.T."/>
            <person name="Qi H."/>
            <person name="Ke H.Z."/>
            <person name="Olson L.M."/>
            <person name="Long K.R."/>
            <person name="Bonnette P.C."/>
            <person name="Baumann A.P."/>
            <person name="Hambor J.E."/>
            <person name="Grasser W.A. III"/>
            <person name="Pan L.C."/>
            <person name="Owen T.A."/>
            <person name="Luzzio M.J."/>
            <person name="Hulford C.A."/>
            <person name="Gebhard D.F."/>
            <person name="Paralkar V.M."/>
            <person name="Simmons H.A."/>
            <person name="Kath J.C."/>
            <person name="Roberts W.G."/>
            <person name="Smock S.L."/>
            <person name="Guzman-Perez A."/>
            <person name="Brown T.A."/>
            <person name="Li M."/>
        </authorList>
    </citation>
    <scope>DISRUPTION PHENOTYPE</scope>
    <scope>FUNCTION</scope>
    <scope>CATALYTIC ACTIVITY</scope>
    <scope>ACTIVITY REGULATION</scope>
</reference>
<reference key="22">
    <citation type="journal article" date="2008" name="Nat. Immunol.">
        <title>Nonmuscle myosin light-chain kinase mediates neutrophil transmigration in sepsis-induced lung inflammation by activating beta2 integrins.</title>
        <authorList>
            <person name="Xu J."/>
            <person name="Gao X.-P."/>
            <person name="Ramchandran R."/>
            <person name="Zhao Y.-Y."/>
            <person name="Vogel S.M."/>
            <person name="Malik A.B."/>
        </authorList>
    </citation>
    <scope>FUNCTION DURING LUNG INJURY</scope>
    <scope>PHOSPHORYLATION BY MYLK</scope>
    <scope>INTERACTION WITH MYLK</scope>
</reference>
<reference key="23">
    <citation type="journal article" date="2009" name="Immunity">
        <title>The phagosomal proteome in interferon-gamma-activated macrophages.</title>
        <authorList>
            <person name="Trost M."/>
            <person name="English L."/>
            <person name="Lemieux S."/>
            <person name="Courcelles M."/>
            <person name="Desjardins M."/>
            <person name="Thibault P."/>
        </authorList>
    </citation>
    <scope>PHOSPHORYLATION [LARGE SCALE ANALYSIS] AT SER-375</scope>
    <scope>IDENTIFICATION BY MASS SPECTROMETRY [LARGE SCALE ANALYSIS]</scope>
</reference>
<reference key="24">
    <citation type="journal article" date="2009" name="J. Biol. Chem.">
        <title>B cell receptor-induced phosphorylation of Pyk2 and focal adhesion kinase involves integrins and the Rap GTPases and is required for B cell spreading.</title>
        <authorList>
            <person name="Tse K.W."/>
            <person name="Dang-Lawson M."/>
            <person name="Lee R.L."/>
            <person name="Vong D."/>
            <person name="Bulic A."/>
            <person name="Buckbinder L."/>
            <person name="Gold M.R."/>
        </authorList>
    </citation>
    <scope>FUNCTION</scope>
</reference>
<reference key="25">
    <citation type="journal article" date="2010" name="Cell">
        <title>A tissue-specific atlas of mouse protein phosphorylation and expression.</title>
        <authorList>
            <person name="Huttlin E.L."/>
            <person name="Jedrychowski M.P."/>
            <person name="Elias J.E."/>
            <person name="Goswami T."/>
            <person name="Rad R."/>
            <person name="Beausoleil S.A."/>
            <person name="Villen J."/>
            <person name="Haas W."/>
            <person name="Sowa M.E."/>
            <person name="Gygi S.P."/>
        </authorList>
    </citation>
    <scope>PHOSPHORYLATION [LARGE SCALE ANALYSIS] AT SER-375</scope>
    <scope>IDENTIFICATION BY MASS SPECTROMETRY [LARGE SCALE ANALYSIS]</scope>
    <source>
        <tissue>Brain</tissue>
        <tissue>Brown adipose tissue</tissue>
        <tissue>Kidney</tissue>
        <tissue>Lung</tissue>
        <tissue>Spleen</tissue>
    </source>
</reference>
<reference key="26">
    <citation type="journal article" date="2010" name="J. Biol. Chem.">
        <title>Pyk2 inhibition of p53 as an adaptive and intrinsic mechanism facilitating cell proliferation and survival.</title>
        <authorList>
            <person name="Lim S.T."/>
            <person name="Miller N.L."/>
            <person name="Nam J.O."/>
            <person name="Chen X.L."/>
            <person name="Lim Y."/>
            <person name="Schlaepfer D.D."/>
        </authorList>
    </citation>
    <scope>FUNCTION IN CELL PROLIFERATION AND REGULATION OF P53/TP53 UBIQUITINATION</scope>
    <scope>SUBCELLULAR LOCATION</scope>
</reference>
<reference key="27">
    <citation type="journal article" date="2010" name="J. Biol. Chem.">
        <title>Regulation of the tyrosine kinase Pyk2 by calcium is through production of reactive oxygen species in cytotoxic T lymphocytes.</title>
        <authorList>
            <person name="Lysechko T.L."/>
            <person name="Cheung S.M."/>
            <person name="Ostergaard H.L."/>
        </authorList>
    </citation>
    <scope>FUNCTION</scope>
    <scope>PHOSPHORYLATION AT TYR-402 AND TYR-579</scope>
    <scope>ACTIVITY REGULATION</scope>
</reference>
<reference key="28">
    <citation type="journal article" date="2011" name="Cell. Signal.">
        <title>Hypophosphorylated and inactive Pyk2 associates with paxillin at the microtubule organizing center in hematopoietic cells.</title>
        <authorList>
            <person name="St-Pierre J."/>
            <person name="Lysechko T.L."/>
            <person name="Ostergaard H.L."/>
        </authorList>
    </citation>
    <scope>INTERACTION WITH PXN</scope>
    <scope>SUBCELLULAR LOCATION</scope>
    <scope>PHOSPHORYLATION AT TYR-402; TYR-580 AND TYR-881</scope>
</reference>
<reference key="29">
    <citation type="journal article" date="2011" name="Exp. Cell Res.">
        <title>Decreased cell adhesion promotes angiogenesis in a Pyk2-dependent manner.</title>
        <authorList>
            <person name="Shen C.J."/>
            <person name="Raghavan S."/>
            <person name="Xu Z."/>
            <person name="Baranski J.D."/>
            <person name="Yu X."/>
            <person name="Wozniak M.A."/>
            <person name="Miller J.S."/>
            <person name="Gupta M."/>
            <person name="Buckbinder L."/>
            <person name="Chen C.S."/>
        </authorList>
    </citation>
    <scope>FUNCTION IN SPROUTING ANGIOGENESIS</scope>
</reference>
<protein>
    <recommendedName>
        <fullName>Protein-tyrosine kinase 2-beta</fullName>
        <ecNumber>2.7.10.2</ecNumber>
    </recommendedName>
    <alternativeName>
        <fullName>Calcium-dependent tyrosine kinase</fullName>
        <shortName>CADTK</shortName>
    </alternativeName>
    <alternativeName>
        <fullName>Calcium-regulated non-receptor proline-rich tyrosine kinase</fullName>
    </alternativeName>
    <alternativeName>
        <fullName>Cell adhesion kinase beta</fullName>
        <shortName>CAK-beta</shortName>
        <shortName>CAKB</shortName>
    </alternativeName>
    <alternativeName>
        <fullName>Focal adhesion kinase 2</fullName>
        <shortName>FADK 2</shortName>
    </alternativeName>
    <alternativeName>
        <fullName>Proline-rich tyrosine kinase 2</fullName>
    </alternativeName>
    <alternativeName>
        <fullName>Related adhesion focal tyrosine kinase</fullName>
        <shortName>RAFTK</shortName>
    </alternativeName>
</protein>
<comment type="function">
    <text evidence="1 9 10 15 16 17 18 19 20 21 22 23 25">Non-receptor protein-tyrosine kinase that regulates reorganization of the actin cytoskeleton, cell polarization, cell migration, adhesion, spreading and bone remodeling. Plays a role in the regulation of the humoral immune response, and is required for normal levels of marginal B-cells in the spleen and normal migration of splenic B-cells. Required for normal macrophage polarization and migration towards sites of inflammation. Regulates cytoskeleton rearrangement and cell spreading in T-cells, and contributes to the regulation of T-cell responses. Promotes osteoclastic bone resorption; this requires both PTK2B/PYK2 and SRC. May inhibit differentiation and activity of osteoprogenitor cells. Functions in signaling downstream of integrin and collagen receptors, immune receptors, G-protein coupled receptors (GPCR), cytokine, chemokine and growth factor receptors, and mediates responses to cellular stress. Forms multisubunit signaling complexes with SRC and SRC family members upon activation; this leads to the phosphorylation of additional tyrosine residues, creating binding sites for scaffold proteins, effectors and substrates. Regulates numerous signaling pathways. Promotes activation of phosphatidylinositol 3-kinase and of the AKT1 signaling cascade. Promotes activation of NOS3. Regulates production of the cellular messenger cGMP. Promotes activation of the MAP kinase signaling cascade, including activation of MAPK1/ERK2, MAPK3/ERK1 and MAPK8/JNK1. Promotes activation of Rho family GTPases, such as RHOA and RAC1. Recruits the ubiquitin ligase MDM2 to P53/TP53 in the nucleus, and thereby regulates P53/TP53 activity, P53/TP53 ubiquitination and proteasomal degradation. Acts as a scaffold, binding to both PDPK1 and SRC, thereby allowing SRC to phosphorylate PDPK1 at 'Tyr-9, 'Tyr-373', and 'Tyr-376' (By similarity). Promotes phosphorylation of NMDA receptors by SRC family members, and thereby contributes to the regulation of NMDA receptor ion channel activity and intracellular Ca(2+) levels. May also regulate potassium ion transport by phosphorylation of potassium channel subunits. Phosphorylates SRC; this increases SRC kinase activity. Phosphorylates ASAP1, NPHP1, KCNA2 and SHC1. Promotes phosphorylation of ASAP2, RHOU and PXN; this requires both SRC and PTK2/PYK2 (By similarity).</text>
</comment>
<comment type="catalytic activity">
    <reaction evidence="6 17">
        <text>L-tyrosyl-[protein] + ATP = O-phospho-L-tyrosyl-[protein] + ADP + H(+)</text>
        <dbReference type="Rhea" id="RHEA:10596"/>
        <dbReference type="Rhea" id="RHEA-COMP:10136"/>
        <dbReference type="Rhea" id="RHEA-COMP:20101"/>
        <dbReference type="ChEBI" id="CHEBI:15378"/>
        <dbReference type="ChEBI" id="CHEBI:30616"/>
        <dbReference type="ChEBI" id="CHEBI:46858"/>
        <dbReference type="ChEBI" id="CHEBI:61978"/>
        <dbReference type="ChEBI" id="CHEBI:456216"/>
        <dbReference type="EC" id="2.7.10.2"/>
    </reaction>
</comment>
<comment type="activity regulation">
    <text evidence="17 23">Activated in response to stimuli that lead to increased intracellular Ca(2+) levels; this activation is indirect and may be mediated by calcium-mediated production of reactive oxygen species (ROS). Activated by autophosphorylation at Tyr-402; this creates a binding site for SRC family kinases and leads to phosphorylation at additional tyrosine residues. Phosphorylation at Tyr-402, Tyr-579 and Tyr-580 is required for optimal kinase activity.</text>
</comment>
<comment type="subunit">
    <text evidence="2 8 10 12 13 14 16 18 20 24 26 27">Homodimer, or homooligomer. Interacts with KCNA2 (By similarity). Interacts with NPHP1, ASAP1, ASAP2, ARHGAP26, SKAP2 and TGFB1I1. The Tyr-402 phosphorylated form interacts with SRC (via SH2 domain) and SRC family members. Forms a signaling complex with EPHA1, LCK and phosphatidylinositol 3-kinase; upon activation by EFNA1. Interacts with GRB2 (via SH2 domain). Interacts with P53/TP53 and MDM2. Interacts with MYLK. Interacts with BCAR1. Interacts with RB1CC1. Interacts with RHOU. Interacts with VAV1. Interacts with PDPK1. Interacts with DLG4. Interacts with LPXN and PTPN12. Interacts with SIRPA and SH2D3C. Interacts (hypophosphorylated) with PXN. Interacts with ARHGAP10.</text>
</comment>
<comment type="subcellular location">
    <subcellularLocation>
        <location>Cytoplasm</location>
    </subcellularLocation>
    <subcellularLocation>
        <location evidence="1">Cytoplasm</location>
        <location evidence="1">Perinuclear region</location>
    </subcellularLocation>
    <subcellularLocation>
        <location>Cell membrane</location>
        <topology>Peripheral membrane protein</topology>
        <orientation>Cytoplasmic side</orientation>
    </subcellularLocation>
    <subcellularLocation>
        <location>Cell junction</location>
        <location>Focal adhesion</location>
    </subcellularLocation>
    <subcellularLocation>
        <location evidence="1">Cell projection</location>
        <location evidence="1">Lamellipodium</location>
    </subcellularLocation>
    <subcellularLocation>
        <location evidence="1">Cytoplasm</location>
        <location evidence="1">Cell cortex</location>
    </subcellularLocation>
    <subcellularLocation>
        <location evidence="1">Nucleus</location>
    </subcellularLocation>
    <text evidence="1">Colocalizes with integrins at the cell periphery (By similarity). Interaction with NPHP1 induces the membrane-association of the kinase. Colocalizes with PXN at the microtubule-organizing center. The tyrosine phosphorylated form is detected at cell-cell contacts.</text>
</comment>
<comment type="PTM">
    <text evidence="1">Phosphorylated on tyrosine residues in response to various stimuli that elevate the intracellular calcium concentration; this activation is indirect and may be mediated by production of reactive oxygen species (ROS). Tyr-402 is the major autophosphorylation site, but other kinases can also phosphorylate Tyr-402. Autophosphorylation occurs in trans, i.e. one subunit of the dimeric receptor phosphorylates tyrosine residues on the other subunit. Phosphorylation at Tyr-402 promotes interaction with SRC and SRC family members, leading to phosphorylation at Tyr-579; Tyr-580 and Tyr-881. Phosphorylation at Tyr-881 is important for interaction with GRB2. Phosphorylated on tyrosine residues upon activation of FGR and PKC. Recruitment by NPHP1 to cell matrix adhesions initiates Tyr-402 phosphorylation. In monocytes, adherence to substrata is required for tyrosine phosphorylation and kinase activation. Angiotensin II, thapsigargin and L-alpha-lysophosphatidic acid (LPA) also induce autophosphorylation and increase kinase activity. Phosphorylation by MYLK promotes ITGB2 activation and is thus essential to trigger neutrophil transmigration during lung injury. Dephosphorylated by PTPN12 (By similarity).</text>
</comment>
<comment type="disruption phenotype">
    <text evidence="9 15 17 19">Mice are born at the expected Mendelian rate, appear normal and are fertile. Mice display increased bone formation and high bone mass, due to defects in osteoclastic bone resorption. Osteoclasts display defects in actin cytoskeleton reorganization, plus altered Rho activity, microtubule stabilization and podosome organization. Mice also display increased differentiation and activity of osteoprogenitor cells. Macrophages from mutant mice display defects in their responses to chemokines, including defects in cell polarization, actin cytoskeleton reorganization, directed migration towards sites of inflammation, but also defects in the regulation of intracellular Ca(2+) levels, phosphatidylinositol 3-kinase activity and inositol 1,4,5-trisphosphate production. Mutant mice have normal B-cell polulations in bone marrow, lymph nodes and blood, but lack marginal zone B-cells in the spleen.</text>
</comment>
<comment type="similarity">
    <text evidence="5">Belongs to the protein kinase superfamily. Tyr protein kinase family. FAK subfamily.</text>
</comment>
<accession>Q9QVP9</accession>
<accession>B2RQ16</accession>
<accession>G3X8V1</accession>
<sequence>MSGVSEPLSRVKVGTLRRPEGPPEPMVVVPVDVEKEDVRILKVCFYSNSFNPGKNFKLVKCTVQTEIQEIITSILLSGRIGPNIQLAECYGLRLKHMKSDEIHWLHPQMTVGEVQDKYECLHVEAEWRYDLQIRYLPEDFMESLKEDRTTLLYFYQQLRNDYMQRYASKVSEGMALQLGCLELRRFFKDMPHNALDKKSNFELLEKEVGLDLFFPKQMQENLKPKQFRKMIQQTFQQYASLREEECVMKFFNTLAGFANIDQETYRCELIQGWNITVDLVIGPKGIRQLTSQDTKPTCLAEFKQIKSIRCLPLEETQAVLQLGIEGAPQSLSIKTSSLAEAENMADLIDGYCRLQGEHKGSLIMHAKKDGEKRNSLPQIPTLNLEARRSHLSESCSIESDIYAEIPDETLRRPGGPQYGVAREEVVLNRILGEGFFGEVYEGVYTNHKGEKINVAVKTCKKDCTQDNKEKFMSEAVIMKNLDHPHIVKLIGIIEEEPTWIIMELYPYGELGHYLERNKNSLKVPTLVLYTLQICKAMAYLESINCVHRDIAVRNILVASPECVKLGDFGLSRYIEDEDYYKASVTRLPIKWMSPESINFRRFTTASDVWMFAVCMWEILSFGKQPFFWLENKDVIGVLEKGDRLPKPELCPPVLYTLMTRCWDYDPSDRPRFTELVCSLSDIYQMEKDIAIEQERNARYRPPKILEPTTFQEPPPKPSRPKYRPPPQTNLLAPKLQFQVPEGLCASSPTLTSPMEYPSPVNSLHTPPLHRHNVFKRHSMREEDFIRPSSREEAQQLWEAEKIKMKQVLERQQKQMVEDSQWLRREERCLDPMVYMNDKSPLTPEKEAGYTEFTGPPQKPPRLGAQSIQPTANLDRTDDLVYHNVMTLVEAVLELKNKLGQLPPEDYVVVVKNVGLNLRKLIGSVDDLLPSLPASSRTEIEGTQKLLNKDLAELINKMKLAQQNAVTSLSEDCKRQMLTASHTLAVDAKNLLDAVDQAKVVANLAHPPAE</sequence>
<dbReference type="EC" id="2.7.10.2"/>
<dbReference type="EMBL" id="AC126272">
    <property type="status" value="NOT_ANNOTATED_CDS"/>
    <property type="molecule type" value="Genomic_DNA"/>
</dbReference>
<dbReference type="EMBL" id="AC140329">
    <property type="status" value="NOT_ANNOTATED_CDS"/>
    <property type="molecule type" value="Genomic_DNA"/>
</dbReference>
<dbReference type="EMBL" id="CH466535">
    <property type="protein sequence ID" value="EDL36001.1"/>
    <property type="molecule type" value="Genomic_DNA"/>
</dbReference>
<dbReference type="EMBL" id="BC137704">
    <property type="protein sequence ID" value="AAI37705.1"/>
    <property type="molecule type" value="mRNA"/>
</dbReference>
<dbReference type="EMBL" id="BC144849">
    <property type="protein sequence ID" value="AAI44850.1"/>
    <property type="molecule type" value="mRNA"/>
</dbReference>
<dbReference type="CCDS" id="CCDS49526.1"/>
<dbReference type="RefSeq" id="NP_001155838.1">
    <property type="nucleotide sequence ID" value="NM_001162366.2"/>
</dbReference>
<dbReference type="RefSeq" id="NP_001347162.1">
    <property type="nucleotide sequence ID" value="NM_001360233.1"/>
</dbReference>
<dbReference type="RefSeq" id="XP_006518789.1">
    <property type="nucleotide sequence ID" value="XM_006518726.3"/>
</dbReference>
<dbReference type="RefSeq" id="XP_011243296.1">
    <property type="nucleotide sequence ID" value="XM_011244994.2"/>
</dbReference>
<dbReference type="SMR" id="Q9QVP9"/>
<dbReference type="BioGRID" id="202467">
    <property type="interactions" value="37"/>
</dbReference>
<dbReference type="CORUM" id="Q9QVP9"/>
<dbReference type="FunCoup" id="Q9QVP9">
    <property type="interactions" value="881"/>
</dbReference>
<dbReference type="IntAct" id="Q9QVP9">
    <property type="interactions" value="6"/>
</dbReference>
<dbReference type="MINT" id="Q9QVP9"/>
<dbReference type="STRING" id="10090.ENSMUSP00000022622"/>
<dbReference type="BindingDB" id="Q9QVP9"/>
<dbReference type="ChEMBL" id="CHEMBL1075289"/>
<dbReference type="GlyGen" id="Q9QVP9">
    <property type="glycosylation" value="1 site, 1 O-linked glycan (1 site)"/>
</dbReference>
<dbReference type="iPTMnet" id="Q9QVP9"/>
<dbReference type="PhosphoSitePlus" id="Q9QVP9"/>
<dbReference type="SwissPalm" id="Q9QVP9"/>
<dbReference type="CPTAC" id="non-CPTAC-3644"/>
<dbReference type="jPOST" id="Q9QVP9"/>
<dbReference type="PaxDb" id="10090-ENSMUSP00000106750"/>
<dbReference type="ProteomicsDB" id="271727"/>
<dbReference type="Antibodypedia" id="3551">
    <property type="antibodies" value="1063 antibodies from 45 providers"/>
</dbReference>
<dbReference type="DNASU" id="19229"/>
<dbReference type="Ensembl" id="ENSMUST00000022622.14">
    <property type="protein sequence ID" value="ENSMUSP00000022622.8"/>
    <property type="gene ID" value="ENSMUSG00000059456.14"/>
</dbReference>
<dbReference type="Ensembl" id="ENSMUST00000178730.8">
    <property type="protein sequence ID" value="ENSMUSP00000137008.2"/>
    <property type="gene ID" value="ENSMUSG00000059456.14"/>
</dbReference>
<dbReference type="GeneID" id="19229"/>
<dbReference type="KEGG" id="mmu:19229"/>
<dbReference type="UCSC" id="uc011znr.1">
    <property type="organism name" value="mouse"/>
</dbReference>
<dbReference type="AGR" id="MGI:104908"/>
<dbReference type="CTD" id="2185"/>
<dbReference type="MGI" id="MGI:104908">
    <property type="gene designation" value="Ptk2b"/>
</dbReference>
<dbReference type="VEuPathDB" id="HostDB:ENSMUSG00000059456"/>
<dbReference type="eggNOG" id="KOG4257">
    <property type="taxonomic scope" value="Eukaryota"/>
</dbReference>
<dbReference type="GeneTree" id="ENSGT00940000157269"/>
<dbReference type="InParanoid" id="Q9QVP9"/>
<dbReference type="OMA" id="EIMSYGQ"/>
<dbReference type="OrthoDB" id="9976756at2759"/>
<dbReference type="PhylomeDB" id="Q9QVP9"/>
<dbReference type="BRENDA" id="2.7.10.2">
    <property type="organism ID" value="3474"/>
</dbReference>
<dbReference type="Reactome" id="R-MMU-391160">
    <property type="pathway name" value="Signal regulatory protein family interactions"/>
</dbReference>
<dbReference type="Reactome" id="R-MMU-4420097">
    <property type="pathway name" value="VEGFA-VEGFR2 Pathway"/>
</dbReference>
<dbReference type="Reactome" id="R-MMU-9013420">
    <property type="pathway name" value="RHOU GTPase cycle"/>
</dbReference>
<dbReference type="Reactome" id="R-MMU-9020558">
    <property type="pathway name" value="Interleukin-2 signaling"/>
</dbReference>
<dbReference type="BioGRID-ORCS" id="19229">
    <property type="hits" value="2 hits in 81 CRISPR screens"/>
</dbReference>
<dbReference type="ChiTaRS" id="Ptk2b">
    <property type="organism name" value="mouse"/>
</dbReference>
<dbReference type="PRO" id="PR:Q9QVP9"/>
<dbReference type="Proteomes" id="UP000000589">
    <property type="component" value="Chromosome 14"/>
</dbReference>
<dbReference type="RNAct" id="Q9QVP9">
    <property type="molecule type" value="protein"/>
</dbReference>
<dbReference type="Bgee" id="ENSMUSG00000059456">
    <property type="expression patterns" value="Expressed in dentate gyrus of hippocampal formation granule cell and 187 other cell types or tissues"/>
</dbReference>
<dbReference type="ExpressionAtlas" id="Q9QVP9">
    <property type="expression patterns" value="baseline and differential"/>
</dbReference>
<dbReference type="GO" id="GO:0097440">
    <property type="term" value="C:apical dendrite"/>
    <property type="evidence" value="ECO:0000250"/>
    <property type="project" value="Alzheimers_University_of_Toronto"/>
</dbReference>
<dbReference type="GO" id="GO:0044297">
    <property type="term" value="C:cell body"/>
    <property type="evidence" value="ECO:0000250"/>
    <property type="project" value="Alzheimers_University_of_Toronto"/>
</dbReference>
<dbReference type="GO" id="GO:0005938">
    <property type="term" value="C:cell cortex"/>
    <property type="evidence" value="ECO:0007669"/>
    <property type="project" value="UniProtKB-SubCell"/>
</dbReference>
<dbReference type="GO" id="GO:0005856">
    <property type="term" value="C:cytoskeleton"/>
    <property type="evidence" value="ECO:0007669"/>
    <property type="project" value="InterPro"/>
</dbReference>
<dbReference type="GO" id="GO:0030425">
    <property type="term" value="C:dendrite"/>
    <property type="evidence" value="ECO:0000250"/>
    <property type="project" value="Alzheimers_University_of_Toronto"/>
</dbReference>
<dbReference type="GO" id="GO:0005925">
    <property type="term" value="C:focal adhesion"/>
    <property type="evidence" value="ECO:0007669"/>
    <property type="project" value="UniProtKB-SubCell"/>
</dbReference>
<dbReference type="GO" id="GO:0098978">
    <property type="term" value="C:glutamatergic synapse"/>
    <property type="evidence" value="ECO:0000314"/>
    <property type="project" value="SynGO"/>
</dbReference>
<dbReference type="GO" id="GO:0030426">
    <property type="term" value="C:growth cone"/>
    <property type="evidence" value="ECO:0000250"/>
    <property type="project" value="Alzheimers_University_of_Toronto"/>
</dbReference>
<dbReference type="GO" id="GO:0030027">
    <property type="term" value="C:lamellipodium"/>
    <property type="evidence" value="ECO:0000250"/>
    <property type="project" value="UniProtKB"/>
</dbReference>
<dbReference type="GO" id="GO:0043025">
    <property type="term" value="C:neuronal cell body"/>
    <property type="evidence" value="ECO:0000250"/>
    <property type="project" value="Alzheimers_University_of_Toronto"/>
</dbReference>
<dbReference type="GO" id="GO:0017146">
    <property type="term" value="C:NMDA selective glutamate receptor complex"/>
    <property type="evidence" value="ECO:0000250"/>
    <property type="project" value="Alzheimers_University_of_Toronto"/>
</dbReference>
<dbReference type="GO" id="GO:0005634">
    <property type="term" value="C:nucleus"/>
    <property type="evidence" value="ECO:0000314"/>
    <property type="project" value="UniProtKB"/>
</dbReference>
<dbReference type="GO" id="GO:0048471">
    <property type="term" value="C:perinuclear region of cytoplasm"/>
    <property type="evidence" value="ECO:0000314"/>
    <property type="project" value="MGI"/>
</dbReference>
<dbReference type="GO" id="GO:0014069">
    <property type="term" value="C:postsynaptic density"/>
    <property type="evidence" value="ECO:0000250"/>
    <property type="project" value="Alzheimers_University_of_Toronto"/>
</dbReference>
<dbReference type="GO" id="GO:0099092">
    <property type="term" value="C:postsynaptic density, intracellular component"/>
    <property type="evidence" value="ECO:0000314"/>
    <property type="project" value="SynGO"/>
</dbReference>
<dbReference type="GO" id="GO:0098793">
    <property type="term" value="C:presynapse"/>
    <property type="evidence" value="ECO:0000314"/>
    <property type="project" value="SynGO"/>
</dbReference>
<dbReference type="GO" id="GO:0005524">
    <property type="term" value="F:ATP binding"/>
    <property type="evidence" value="ECO:0007669"/>
    <property type="project" value="UniProtKB-KW"/>
</dbReference>
<dbReference type="GO" id="GO:0004683">
    <property type="term" value="F:calcium/calmodulin-dependent protein kinase activity"/>
    <property type="evidence" value="ECO:0000250"/>
    <property type="project" value="Alzheimers_University_of_Toronto"/>
</dbReference>
<dbReference type="GO" id="GO:0035255">
    <property type="term" value="F:ionotropic glutamate receptor binding"/>
    <property type="evidence" value="ECO:0000250"/>
    <property type="project" value="Alzheimers_University_of_Toronto"/>
</dbReference>
<dbReference type="GO" id="GO:0099602">
    <property type="term" value="F:neurotransmitter receptor regulator activity"/>
    <property type="evidence" value="ECO:0000250"/>
    <property type="project" value="Alzheimers_University_of_Toronto"/>
</dbReference>
<dbReference type="GO" id="GO:0004715">
    <property type="term" value="F:non-membrane spanning protein tyrosine kinase activity"/>
    <property type="evidence" value="ECO:0000314"/>
    <property type="project" value="UniProtKB"/>
</dbReference>
<dbReference type="GO" id="GO:0004672">
    <property type="term" value="F:protein kinase activity"/>
    <property type="evidence" value="ECO:0000314"/>
    <property type="project" value="MGI"/>
</dbReference>
<dbReference type="GO" id="GO:0030546">
    <property type="term" value="F:signaling receptor activator activity"/>
    <property type="evidence" value="ECO:0000250"/>
    <property type="project" value="Alzheimers_University_of_Toronto"/>
</dbReference>
<dbReference type="GO" id="GO:0002250">
    <property type="term" value="P:adaptive immune response"/>
    <property type="evidence" value="ECO:0007669"/>
    <property type="project" value="UniProtKB-KW"/>
</dbReference>
<dbReference type="GO" id="GO:0045453">
    <property type="term" value="P:bone resorption"/>
    <property type="evidence" value="ECO:0000315"/>
    <property type="project" value="UniProtKB"/>
</dbReference>
<dbReference type="GO" id="GO:0007166">
    <property type="term" value="P:cell surface receptor signaling pathway"/>
    <property type="evidence" value="ECO:0000250"/>
    <property type="project" value="UniProtKB"/>
</dbReference>
<dbReference type="GO" id="GO:0006968">
    <property type="term" value="P:cellular defense response"/>
    <property type="evidence" value="ECO:0000250"/>
    <property type="project" value="Alzheimers_University_of_Toronto"/>
</dbReference>
<dbReference type="GO" id="GO:0071498">
    <property type="term" value="P:cellular response to fluid shear stress"/>
    <property type="evidence" value="ECO:0000315"/>
    <property type="project" value="MGI"/>
</dbReference>
<dbReference type="GO" id="GO:0071300">
    <property type="term" value="P:cellular response to retinoic acid"/>
    <property type="evidence" value="ECO:0007669"/>
    <property type="project" value="Ensembl"/>
</dbReference>
<dbReference type="GO" id="GO:0070098">
    <property type="term" value="P:chemokine-mediated signaling pathway"/>
    <property type="evidence" value="ECO:0000315"/>
    <property type="project" value="UniProtKB"/>
</dbReference>
<dbReference type="GO" id="GO:0030865">
    <property type="term" value="P:cortical cytoskeleton organization"/>
    <property type="evidence" value="ECO:0000315"/>
    <property type="project" value="UniProtKB"/>
</dbReference>
<dbReference type="GO" id="GO:0007010">
    <property type="term" value="P:cytoskeleton organization"/>
    <property type="evidence" value="ECO:0000315"/>
    <property type="project" value="MGI"/>
</dbReference>
<dbReference type="GO" id="GO:0086100">
    <property type="term" value="P:endothelin receptor signaling pathway"/>
    <property type="evidence" value="ECO:0000250"/>
    <property type="project" value="UniProtKB"/>
</dbReference>
<dbReference type="GO" id="GO:0007030">
    <property type="term" value="P:Golgi organization"/>
    <property type="evidence" value="ECO:0000315"/>
    <property type="project" value="MGI"/>
</dbReference>
<dbReference type="GO" id="GO:0007229">
    <property type="term" value="P:integrin-mediated signaling pathway"/>
    <property type="evidence" value="ECO:0000250"/>
    <property type="project" value="UniProtKB"/>
</dbReference>
<dbReference type="GO" id="GO:0035235">
    <property type="term" value="P:ionotropic glutamate receptor signaling pathway"/>
    <property type="evidence" value="ECO:0000250"/>
    <property type="project" value="Alzheimers_University_of_Toronto"/>
</dbReference>
<dbReference type="GO" id="GO:0060291">
    <property type="term" value="P:long-term synaptic potentiation"/>
    <property type="evidence" value="ECO:0000250"/>
    <property type="project" value="Alzheimers_University_of_Toronto"/>
</dbReference>
<dbReference type="GO" id="GO:0002315">
    <property type="term" value="P:marginal zone B cell differentiation"/>
    <property type="evidence" value="ECO:0000315"/>
    <property type="project" value="UniProtKB"/>
</dbReference>
<dbReference type="GO" id="GO:0043066">
    <property type="term" value="P:negative regulation of apoptotic process"/>
    <property type="evidence" value="ECO:0000315"/>
    <property type="project" value="UniProtKB"/>
</dbReference>
<dbReference type="GO" id="GO:0030502">
    <property type="term" value="P:negative regulation of bone mineralization"/>
    <property type="evidence" value="ECO:0000315"/>
    <property type="project" value="UniProtKB"/>
</dbReference>
<dbReference type="GO" id="GO:0008285">
    <property type="term" value="P:negative regulation of cell population proliferation"/>
    <property type="evidence" value="ECO:0000250"/>
    <property type="project" value="UniProtKB"/>
</dbReference>
<dbReference type="GO" id="GO:0045638">
    <property type="term" value="P:negative regulation of myeloid cell differentiation"/>
    <property type="evidence" value="ECO:0007669"/>
    <property type="project" value="Ensembl"/>
</dbReference>
<dbReference type="GO" id="GO:0043524">
    <property type="term" value="P:negative regulation of neuron apoptotic process"/>
    <property type="evidence" value="ECO:0000250"/>
    <property type="project" value="Alzheimers_University_of_Toronto"/>
</dbReference>
<dbReference type="GO" id="GO:0043267">
    <property type="term" value="P:negative regulation of potassium ion transport"/>
    <property type="evidence" value="ECO:0007669"/>
    <property type="project" value="Ensembl"/>
</dbReference>
<dbReference type="GO" id="GO:0001764">
    <property type="term" value="P:neuron migration"/>
    <property type="evidence" value="ECO:0000314"/>
    <property type="project" value="MGI"/>
</dbReference>
<dbReference type="GO" id="GO:0018108">
    <property type="term" value="P:peptidyl-tyrosine phosphorylation"/>
    <property type="evidence" value="ECO:0000314"/>
    <property type="project" value="UniProtKB"/>
</dbReference>
<dbReference type="GO" id="GO:0030838">
    <property type="term" value="P:positive regulation of actin filament polymerization"/>
    <property type="evidence" value="ECO:0000250"/>
    <property type="project" value="UniProtKB"/>
</dbReference>
<dbReference type="GO" id="GO:0045766">
    <property type="term" value="P:positive regulation of angiogenesis"/>
    <property type="evidence" value="ECO:0000315"/>
    <property type="project" value="UniProtKB"/>
</dbReference>
<dbReference type="GO" id="GO:2000538">
    <property type="term" value="P:positive regulation of B cell chemotaxis"/>
    <property type="evidence" value="ECO:0000315"/>
    <property type="project" value="UniProtKB"/>
</dbReference>
<dbReference type="GO" id="GO:0008284">
    <property type="term" value="P:positive regulation of cell population proliferation"/>
    <property type="evidence" value="ECO:0000315"/>
    <property type="project" value="UniProtKB"/>
</dbReference>
<dbReference type="GO" id="GO:0001954">
    <property type="term" value="P:positive regulation of cell-matrix adhesion"/>
    <property type="evidence" value="ECO:0000250"/>
    <property type="project" value="UniProtKB"/>
</dbReference>
<dbReference type="GO" id="GO:0010595">
    <property type="term" value="P:positive regulation of endothelial cell migration"/>
    <property type="evidence" value="ECO:0000315"/>
    <property type="project" value="UniProtKB"/>
</dbReference>
<dbReference type="GO" id="GO:0070374">
    <property type="term" value="P:positive regulation of ERK1 and ERK2 cascade"/>
    <property type="evidence" value="ECO:0000250"/>
    <property type="project" value="UniProtKB"/>
</dbReference>
<dbReference type="GO" id="GO:2000463">
    <property type="term" value="P:positive regulation of excitatory postsynaptic potential"/>
    <property type="evidence" value="ECO:0000250"/>
    <property type="project" value="Alzheimers_University_of_Toronto"/>
</dbReference>
<dbReference type="GO" id="GO:0046330">
    <property type="term" value="P:positive regulation of JNK cascade"/>
    <property type="evidence" value="ECO:0000250"/>
    <property type="project" value="UniProtKB"/>
</dbReference>
<dbReference type="GO" id="GO:0010976">
    <property type="term" value="P:positive regulation of neuron projection development"/>
    <property type="evidence" value="ECO:0007669"/>
    <property type="project" value="Ensembl"/>
</dbReference>
<dbReference type="GO" id="GO:0051897">
    <property type="term" value="P:positive regulation of phosphatidylinositol 3-kinase/protein kinase B signal transduction"/>
    <property type="evidence" value="ECO:0000315"/>
    <property type="project" value="UniProtKB"/>
</dbReference>
<dbReference type="GO" id="GO:0045860">
    <property type="term" value="P:positive regulation of protein kinase activity"/>
    <property type="evidence" value="ECO:0000250"/>
    <property type="project" value="UniProtKB"/>
</dbReference>
<dbReference type="GO" id="GO:0051968">
    <property type="term" value="P:positive regulation of synaptic transmission, glutamatergic"/>
    <property type="evidence" value="ECO:0000250"/>
    <property type="project" value="Alzheimers_University_of_Toronto"/>
</dbReference>
<dbReference type="GO" id="GO:2000060">
    <property type="term" value="P:positive regulation of ubiquitin-dependent protein catabolic process"/>
    <property type="evidence" value="ECO:0000315"/>
    <property type="project" value="UniProtKB"/>
</dbReference>
<dbReference type="GO" id="GO:0032956">
    <property type="term" value="P:regulation of actin cytoskeleton organization"/>
    <property type="evidence" value="ECO:0000315"/>
    <property type="project" value="UniProtKB"/>
</dbReference>
<dbReference type="GO" id="GO:0030155">
    <property type="term" value="P:regulation of cell adhesion"/>
    <property type="evidence" value="ECO:0000250"/>
    <property type="project" value="UniProtKB"/>
</dbReference>
<dbReference type="GO" id="GO:0008360">
    <property type="term" value="P:regulation of cell shape"/>
    <property type="evidence" value="ECO:0007669"/>
    <property type="project" value="Ensembl"/>
</dbReference>
<dbReference type="GO" id="GO:0010758">
    <property type="term" value="P:regulation of macrophage chemotaxis"/>
    <property type="evidence" value="ECO:0000315"/>
    <property type="project" value="UniProtKB"/>
</dbReference>
<dbReference type="GO" id="GO:0099151">
    <property type="term" value="P:regulation of postsynaptic density assembly"/>
    <property type="evidence" value="ECO:0000314"/>
    <property type="project" value="SynGO"/>
</dbReference>
<dbReference type="GO" id="GO:0051279">
    <property type="term" value="P:regulation of release of sequestered calcium ion into cytosol"/>
    <property type="evidence" value="ECO:0000315"/>
    <property type="project" value="UniProtKB"/>
</dbReference>
<dbReference type="GO" id="GO:0007172">
    <property type="term" value="P:signal complex assembly"/>
    <property type="evidence" value="ECO:0007669"/>
    <property type="project" value="InterPro"/>
</dbReference>
<dbReference type="GO" id="GO:0002040">
    <property type="term" value="P:sprouting angiogenesis"/>
    <property type="evidence" value="ECO:0000315"/>
    <property type="project" value="UniProtKB"/>
</dbReference>
<dbReference type="GO" id="GO:0033209">
    <property type="term" value="P:tumor necrosis factor-mediated signaling pathway"/>
    <property type="evidence" value="ECO:0007669"/>
    <property type="project" value="Ensembl"/>
</dbReference>
<dbReference type="GO" id="GO:0048010">
    <property type="term" value="P:vascular endothelial growth factor receptor signaling pathway"/>
    <property type="evidence" value="ECO:0000315"/>
    <property type="project" value="UniProtKB"/>
</dbReference>
<dbReference type="CDD" id="cd14473">
    <property type="entry name" value="FERM_B-lobe"/>
    <property type="match status" value="1"/>
</dbReference>
<dbReference type="CDD" id="cd13190">
    <property type="entry name" value="FERM_C_FAK1"/>
    <property type="match status" value="1"/>
</dbReference>
<dbReference type="CDD" id="cd05056">
    <property type="entry name" value="PTKc_FAK"/>
    <property type="match status" value="1"/>
</dbReference>
<dbReference type="FunFam" id="1.20.80.10:FF:000004">
    <property type="entry name" value="Protein-tyrosine kinase 2-beta isoform 1"/>
    <property type="match status" value="1"/>
</dbReference>
<dbReference type="FunFam" id="1.20.120.330:FF:000007">
    <property type="entry name" value="protein-tyrosine kinase 2-beta isoform X1"/>
    <property type="match status" value="1"/>
</dbReference>
<dbReference type="FunFam" id="2.30.29.30:FF:000142">
    <property type="entry name" value="protein-tyrosine kinase 2-beta isoform X1"/>
    <property type="match status" value="1"/>
</dbReference>
<dbReference type="FunFam" id="3.10.20.90:FF:000080">
    <property type="entry name" value="protein-tyrosine kinase 2-beta isoform X1"/>
    <property type="match status" value="1"/>
</dbReference>
<dbReference type="FunFam" id="3.30.200.20:FF:000194">
    <property type="entry name" value="protein-tyrosine kinase 2-beta isoform X1"/>
    <property type="match status" value="1"/>
</dbReference>
<dbReference type="FunFam" id="1.10.510.10:FF:000230">
    <property type="entry name" value="protein-tyrosine kinase 2-beta isoform X2"/>
    <property type="match status" value="1"/>
</dbReference>
<dbReference type="Gene3D" id="1.20.80.10">
    <property type="match status" value="1"/>
</dbReference>
<dbReference type="Gene3D" id="1.20.120.330">
    <property type="entry name" value="Nucleotidyltransferases domain 2"/>
    <property type="match status" value="1"/>
</dbReference>
<dbReference type="Gene3D" id="3.10.20.90">
    <property type="entry name" value="Phosphatidylinositol 3-kinase Catalytic Subunit, Chain A, domain 1"/>
    <property type="match status" value="1"/>
</dbReference>
<dbReference type="Gene3D" id="3.30.200.20">
    <property type="entry name" value="Phosphorylase Kinase, domain 1"/>
    <property type="match status" value="1"/>
</dbReference>
<dbReference type="Gene3D" id="2.30.29.30">
    <property type="entry name" value="Pleckstrin-homology domain (PH domain)/Phosphotyrosine-binding domain (PTB)"/>
    <property type="match status" value="1"/>
</dbReference>
<dbReference type="Gene3D" id="1.10.510.10">
    <property type="entry name" value="Transferase(Phosphotransferase) domain 1"/>
    <property type="match status" value="1"/>
</dbReference>
<dbReference type="InterPro" id="IPR019749">
    <property type="entry name" value="Band_41_domain"/>
</dbReference>
<dbReference type="InterPro" id="IPR041390">
    <property type="entry name" value="FADK_N"/>
</dbReference>
<dbReference type="InterPro" id="IPR049385">
    <property type="entry name" value="FAK1-like_FERM_C"/>
</dbReference>
<dbReference type="InterPro" id="IPR041784">
    <property type="entry name" value="FAK1/PYK2_FERM_C"/>
</dbReference>
<dbReference type="InterPro" id="IPR014352">
    <property type="entry name" value="FERM/acyl-CoA-bd_prot_sf"/>
</dbReference>
<dbReference type="InterPro" id="IPR035963">
    <property type="entry name" value="FERM_2"/>
</dbReference>
<dbReference type="InterPro" id="IPR019748">
    <property type="entry name" value="FERM_central"/>
</dbReference>
<dbReference type="InterPro" id="IPR000299">
    <property type="entry name" value="FERM_domain"/>
</dbReference>
<dbReference type="InterPro" id="IPR036137">
    <property type="entry name" value="Focal_adhe_kin_target_dom_sf"/>
</dbReference>
<dbReference type="InterPro" id="IPR005189">
    <property type="entry name" value="Focal_adhesion_kin_target_dom"/>
</dbReference>
<dbReference type="InterPro" id="IPR011009">
    <property type="entry name" value="Kinase-like_dom_sf"/>
</dbReference>
<dbReference type="InterPro" id="IPR011993">
    <property type="entry name" value="PH-like_dom_sf"/>
</dbReference>
<dbReference type="InterPro" id="IPR000719">
    <property type="entry name" value="Prot_kinase_dom"/>
</dbReference>
<dbReference type="InterPro" id="IPR017441">
    <property type="entry name" value="Protein_kinase_ATP_BS"/>
</dbReference>
<dbReference type="InterPro" id="IPR001245">
    <property type="entry name" value="Ser-Thr/Tyr_kinase_cat_dom"/>
</dbReference>
<dbReference type="InterPro" id="IPR008266">
    <property type="entry name" value="Tyr_kinase_AS"/>
</dbReference>
<dbReference type="InterPro" id="IPR020635">
    <property type="entry name" value="Tyr_kinase_cat_dom"/>
</dbReference>
<dbReference type="InterPro" id="IPR029071">
    <property type="entry name" value="Ubiquitin-like_domsf"/>
</dbReference>
<dbReference type="PANTHER" id="PTHR46221">
    <property type="entry name" value="FERM AND PDZ DOMAIN-CONTAINING PROTEIN FAMILY MEMBER"/>
    <property type="match status" value="1"/>
</dbReference>
<dbReference type="PANTHER" id="PTHR46221:SF11">
    <property type="entry name" value="NON-SPECIFIC PROTEIN-TYROSINE KINASE"/>
    <property type="match status" value="1"/>
</dbReference>
<dbReference type="Pfam" id="PF21477">
    <property type="entry name" value="FERM_C_FAK1"/>
    <property type="match status" value="1"/>
</dbReference>
<dbReference type="Pfam" id="PF00373">
    <property type="entry name" value="FERM_M"/>
    <property type="match status" value="1"/>
</dbReference>
<dbReference type="Pfam" id="PF18038">
    <property type="entry name" value="FERM_N_2"/>
    <property type="match status" value="1"/>
</dbReference>
<dbReference type="Pfam" id="PF03623">
    <property type="entry name" value="Focal_AT"/>
    <property type="match status" value="1"/>
</dbReference>
<dbReference type="Pfam" id="PF07714">
    <property type="entry name" value="PK_Tyr_Ser-Thr"/>
    <property type="match status" value="1"/>
</dbReference>
<dbReference type="PRINTS" id="PR00109">
    <property type="entry name" value="TYRKINASE"/>
</dbReference>
<dbReference type="SMART" id="SM00295">
    <property type="entry name" value="B41"/>
    <property type="match status" value="1"/>
</dbReference>
<dbReference type="SMART" id="SM00219">
    <property type="entry name" value="TyrKc"/>
    <property type="match status" value="1"/>
</dbReference>
<dbReference type="SUPFAM" id="SSF68993">
    <property type="entry name" value="FAT domain of focal adhesion kinase"/>
    <property type="match status" value="1"/>
</dbReference>
<dbReference type="SUPFAM" id="SSF50729">
    <property type="entry name" value="PH domain-like"/>
    <property type="match status" value="1"/>
</dbReference>
<dbReference type="SUPFAM" id="SSF56112">
    <property type="entry name" value="Protein kinase-like (PK-like)"/>
    <property type="match status" value="1"/>
</dbReference>
<dbReference type="SUPFAM" id="SSF47031">
    <property type="entry name" value="Second domain of FERM"/>
    <property type="match status" value="1"/>
</dbReference>
<dbReference type="SUPFAM" id="SSF54236">
    <property type="entry name" value="Ubiquitin-like"/>
    <property type="match status" value="1"/>
</dbReference>
<dbReference type="PROSITE" id="PS50057">
    <property type="entry name" value="FERM_3"/>
    <property type="match status" value="1"/>
</dbReference>
<dbReference type="PROSITE" id="PS00107">
    <property type="entry name" value="PROTEIN_KINASE_ATP"/>
    <property type="match status" value="1"/>
</dbReference>
<dbReference type="PROSITE" id="PS50011">
    <property type="entry name" value="PROTEIN_KINASE_DOM"/>
    <property type="match status" value="1"/>
</dbReference>
<dbReference type="PROSITE" id="PS00109">
    <property type="entry name" value="PROTEIN_KINASE_TYR"/>
    <property type="match status" value="1"/>
</dbReference>
<gene>
    <name type="primary">Ptk2b</name>
    <name type="synonym">Fak2</name>
    <name type="synonym">Pyk2</name>
    <name type="synonym">Raftk</name>
</gene>